<keyword id="KW-0066">ATP synthesis</keyword>
<keyword id="KW-0997">Cell inner membrane</keyword>
<keyword id="KW-1003">Cell membrane</keyword>
<keyword id="KW-0139">CF(1)</keyword>
<keyword id="KW-0375">Hydrogen ion transport</keyword>
<keyword id="KW-0406">Ion transport</keyword>
<keyword id="KW-0472">Membrane</keyword>
<keyword id="KW-0813">Transport</keyword>
<sequence>MENIIARRYAKAIASRADINDFYQNLCILNSAFVLPKFKNIIESNEIKKERKMEFLDSFFDIKNSSFQNFLRLLIENSRLEYIPQIVKELERQKAFKENIFVGIVYSKEKLSQENLKDLEVKLNKKFDANIKLNNKISQDDSVKIELEELGYELSFSMKALQNKLNEYILKII</sequence>
<dbReference type="EMBL" id="CP000814">
    <property type="protein sequence ID" value="ABV51696.1"/>
    <property type="molecule type" value="Genomic_DNA"/>
</dbReference>
<dbReference type="RefSeq" id="WP_002866726.1">
    <property type="nucleotide sequence ID" value="NC_009839.1"/>
</dbReference>
<dbReference type="SMR" id="A8FJQ9"/>
<dbReference type="KEGG" id="cju:C8J_0097"/>
<dbReference type="HOGENOM" id="CLU_085114_3_1_7"/>
<dbReference type="GO" id="GO:0005886">
    <property type="term" value="C:plasma membrane"/>
    <property type="evidence" value="ECO:0007669"/>
    <property type="project" value="UniProtKB-SubCell"/>
</dbReference>
<dbReference type="GO" id="GO:0045259">
    <property type="term" value="C:proton-transporting ATP synthase complex"/>
    <property type="evidence" value="ECO:0007669"/>
    <property type="project" value="UniProtKB-KW"/>
</dbReference>
<dbReference type="GO" id="GO:0046933">
    <property type="term" value="F:proton-transporting ATP synthase activity, rotational mechanism"/>
    <property type="evidence" value="ECO:0007669"/>
    <property type="project" value="UniProtKB-UniRule"/>
</dbReference>
<dbReference type="Gene3D" id="1.10.520.20">
    <property type="entry name" value="N-terminal domain of the delta subunit of the F1F0-ATP synthase"/>
    <property type="match status" value="1"/>
</dbReference>
<dbReference type="HAMAP" id="MF_01416">
    <property type="entry name" value="ATP_synth_delta_bact"/>
    <property type="match status" value="1"/>
</dbReference>
<dbReference type="InterPro" id="IPR026015">
    <property type="entry name" value="ATP_synth_OSCP/delta_N_sf"/>
</dbReference>
<dbReference type="InterPro" id="IPR000711">
    <property type="entry name" value="ATPase_OSCP/dsu"/>
</dbReference>
<dbReference type="NCBIfam" id="TIGR01145">
    <property type="entry name" value="ATP_synt_delta"/>
    <property type="match status" value="1"/>
</dbReference>
<dbReference type="NCBIfam" id="NF006291">
    <property type="entry name" value="PRK08474.1"/>
    <property type="match status" value="1"/>
</dbReference>
<dbReference type="PANTHER" id="PTHR11910">
    <property type="entry name" value="ATP SYNTHASE DELTA CHAIN"/>
    <property type="match status" value="1"/>
</dbReference>
<dbReference type="Pfam" id="PF00213">
    <property type="entry name" value="OSCP"/>
    <property type="match status" value="1"/>
</dbReference>
<dbReference type="PRINTS" id="PR00125">
    <property type="entry name" value="ATPASEDELTA"/>
</dbReference>
<dbReference type="SUPFAM" id="SSF47928">
    <property type="entry name" value="N-terminal domain of the delta subunit of the F1F0-ATP synthase"/>
    <property type="match status" value="1"/>
</dbReference>
<accession>A8FJQ9</accession>
<proteinExistence type="inferred from homology"/>
<evidence type="ECO:0000255" key="1">
    <source>
        <dbReference type="HAMAP-Rule" id="MF_01416"/>
    </source>
</evidence>
<organism>
    <name type="scientific">Campylobacter jejuni subsp. jejuni serotype O:6 (strain 81116 / NCTC 11828)</name>
    <dbReference type="NCBI Taxonomy" id="407148"/>
    <lineage>
        <taxon>Bacteria</taxon>
        <taxon>Pseudomonadati</taxon>
        <taxon>Campylobacterota</taxon>
        <taxon>Epsilonproteobacteria</taxon>
        <taxon>Campylobacterales</taxon>
        <taxon>Campylobacteraceae</taxon>
        <taxon>Campylobacter</taxon>
    </lineage>
</organism>
<protein>
    <recommendedName>
        <fullName evidence="1">ATP synthase subunit delta</fullName>
    </recommendedName>
    <alternativeName>
        <fullName evidence="1">ATP synthase F(1) sector subunit delta</fullName>
    </alternativeName>
    <alternativeName>
        <fullName evidence="1">F-type ATPase subunit delta</fullName>
        <shortName evidence="1">F-ATPase subunit delta</shortName>
    </alternativeName>
</protein>
<reference key="1">
    <citation type="journal article" date="2007" name="J. Bacteriol.">
        <title>The complete genome sequence of Campylobacter jejuni strain 81116 (NCTC11828).</title>
        <authorList>
            <person name="Pearson B.M."/>
            <person name="Gaskin D.J.H."/>
            <person name="Segers R.P.A.M."/>
            <person name="Wells J.M."/>
            <person name="Nuijten P.J.M."/>
            <person name="van Vliet A.H.M."/>
        </authorList>
    </citation>
    <scope>NUCLEOTIDE SEQUENCE [LARGE SCALE GENOMIC DNA]</scope>
    <source>
        <strain>81116 / NCTC 11828</strain>
    </source>
</reference>
<comment type="function">
    <text evidence="1">F(1)F(0) ATP synthase produces ATP from ADP in the presence of a proton or sodium gradient. F-type ATPases consist of two structural domains, F(1) containing the extramembraneous catalytic core and F(0) containing the membrane proton channel, linked together by a central stalk and a peripheral stalk. During catalysis, ATP synthesis in the catalytic domain of F(1) is coupled via a rotary mechanism of the central stalk subunits to proton translocation.</text>
</comment>
<comment type="function">
    <text evidence="1">This protein is part of the stalk that links CF(0) to CF(1). It either transmits conformational changes from CF(0) to CF(1) or is implicated in proton conduction.</text>
</comment>
<comment type="subunit">
    <text evidence="1">F-type ATPases have 2 components, F(1) - the catalytic core - and F(0) - the membrane proton channel. F(1) has five subunits: alpha(3), beta(3), gamma(1), delta(1), epsilon(1). F(0) has three main subunits: a(1), b(2) and c(10-14). The alpha and beta chains form an alternating ring which encloses part of the gamma chain. F(1) is attached to F(0) by a central stalk formed by the gamma and epsilon chains, while a peripheral stalk is formed by the delta and b chains.</text>
</comment>
<comment type="subcellular location">
    <subcellularLocation>
        <location evidence="1">Cell inner membrane</location>
        <topology evidence="1">Peripheral membrane protein</topology>
    </subcellularLocation>
</comment>
<comment type="similarity">
    <text evidence="1">Belongs to the ATPase delta chain family.</text>
</comment>
<name>ATPD_CAMJ8</name>
<gene>
    <name evidence="1" type="primary">atpH</name>
    <name type="ordered locus">C8J_0097</name>
</gene>
<feature type="chain" id="PRO_0000382077" description="ATP synthase subunit delta">
    <location>
        <begin position="1"/>
        <end position="173"/>
    </location>
</feature>